<evidence type="ECO:0000255" key="1">
    <source>
        <dbReference type="HAMAP-Rule" id="MF_00455"/>
    </source>
</evidence>
<gene>
    <name evidence="1" type="primary">xylA2</name>
    <name type="ordered locus">XC_4191</name>
</gene>
<organism>
    <name type="scientific">Xanthomonas campestris pv. campestris (strain 8004)</name>
    <dbReference type="NCBI Taxonomy" id="314565"/>
    <lineage>
        <taxon>Bacteria</taxon>
        <taxon>Pseudomonadati</taxon>
        <taxon>Pseudomonadota</taxon>
        <taxon>Gammaproteobacteria</taxon>
        <taxon>Lysobacterales</taxon>
        <taxon>Lysobacteraceae</taxon>
        <taxon>Xanthomonas</taxon>
    </lineage>
</organism>
<comment type="catalytic activity">
    <reaction evidence="1">
        <text>alpha-D-xylose = alpha-D-xylulofuranose</text>
        <dbReference type="Rhea" id="RHEA:22816"/>
        <dbReference type="ChEBI" id="CHEBI:28518"/>
        <dbReference type="ChEBI" id="CHEBI:188998"/>
        <dbReference type="EC" id="5.3.1.5"/>
    </reaction>
</comment>
<comment type="cofactor">
    <cofactor evidence="1">
        <name>Mg(2+)</name>
        <dbReference type="ChEBI" id="CHEBI:18420"/>
    </cofactor>
    <text evidence="1">Binds 2 magnesium ions per subunit.</text>
</comment>
<comment type="subunit">
    <text evidence="1">Homotetramer.</text>
</comment>
<comment type="subcellular location">
    <subcellularLocation>
        <location evidence="1">Cytoplasm</location>
    </subcellularLocation>
</comment>
<comment type="similarity">
    <text evidence="1">Belongs to the xylose isomerase family.</text>
</comment>
<accession>Q4UNZ4</accession>
<proteinExistence type="inferred from homology"/>
<name>XYLA2_XANC8</name>
<dbReference type="EC" id="5.3.1.5" evidence="1"/>
<dbReference type="EMBL" id="CP000050">
    <property type="protein sequence ID" value="AAY51229.1"/>
    <property type="molecule type" value="Genomic_DNA"/>
</dbReference>
<dbReference type="RefSeq" id="WP_011039169.1">
    <property type="nucleotide sequence ID" value="NC_007086.1"/>
</dbReference>
<dbReference type="SMR" id="Q4UNZ4"/>
<dbReference type="KEGG" id="xcb:XC_4191"/>
<dbReference type="HOGENOM" id="CLU_037261_1_0_6"/>
<dbReference type="Proteomes" id="UP000000420">
    <property type="component" value="Chromosome"/>
</dbReference>
<dbReference type="GO" id="GO:0005737">
    <property type="term" value="C:cytoplasm"/>
    <property type="evidence" value="ECO:0007669"/>
    <property type="project" value="UniProtKB-SubCell"/>
</dbReference>
<dbReference type="GO" id="GO:0000287">
    <property type="term" value="F:magnesium ion binding"/>
    <property type="evidence" value="ECO:0007669"/>
    <property type="project" value="UniProtKB-UniRule"/>
</dbReference>
<dbReference type="GO" id="GO:0009045">
    <property type="term" value="F:xylose isomerase activity"/>
    <property type="evidence" value="ECO:0007669"/>
    <property type="project" value="UniProtKB-UniRule"/>
</dbReference>
<dbReference type="GO" id="GO:0042732">
    <property type="term" value="P:D-xylose metabolic process"/>
    <property type="evidence" value="ECO:0007669"/>
    <property type="project" value="UniProtKB-UniRule"/>
</dbReference>
<dbReference type="FunFam" id="3.20.20.150:FF:000002">
    <property type="entry name" value="Xylose isomerase"/>
    <property type="match status" value="1"/>
</dbReference>
<dbReference type="Gene3D" id="3.20.20.150">
    <property type="entry name" value="Divalent-metal-dependent TIM barrel enzymes"/>
    <property type="match status" value="1"/>
</dbReference>
<dbReference type="HAMAP" id="MF_00455">
    <property type="entry name" value="Xylose_isom_A"/>
    <property type="match status" value="1"/>
</dbReference>
<dbReference type="InterPro" id="IPR036237">
    <property type="entry name" value="Xyl_isomerase-like_sf"/>
</dbReference>
<dbReference type="InterPro" id="IPR013452">
    <property type="entry name" value="Xylose_isom_bac"/>
</dbReference>
<dbReference type="InterPro" id="IPR001998">
    <property type="entry name" value="Xylose_isomerase"/>
</dbReference>
<dbReference type="NCBIfam" id="NF003998">
    <property type="entry name" value="PRK05474.1"/>
    <property type="match status" value="1"/>
</dbReference>
<dbReference type="NCBIfam" id="NF009115">
    <property type="entry name" value="PRK12465.1"/>
    <property type="match status" value="1"/>
</dbReference>
<dbReference type="NCBIfam" id="TIGR02630">
    <property type="entry name" value="xylose_isom_A"/>
    <property type="match status" value="1"/>
</dbReference>
<dbReference type="PANTHER" id="PTHR48408">
    <property type="match status" value="1"/>
</dbReference>
<dbReference type="PANTHER" id="PTHR48408:SF1">
    <property type="entry name" value="XYLOSE ISOMERASE"/>
    <property type="match status" value="1"/>
</dbReference>
<dbReference type="PRINTS" id="PR00688">
    <property type="entry name" value="XYLOSISMRASE"/>
</dbReference>
<dbReference type="SUPFAM" id="SSF51658">
    <property type="entry name" value="Xylose isomerase-like"/>
    <property type="match status" value="1"/>
</dbReference>
<dbReference type="PROSITE" id="PS51415">
    <property type="entry name" value="XYLOSE_ISOMERASE"/>
    <property type="match status" value="1"/>
</dbReference>
<keyword id="KW-0119">Carbohydrate metabolism</keyword>
<keyword id="KW-0963">Cytoplasm</keyword>
<keyword id="KW-0413">Isomerase</keyword>
<keyword id="KW-0460">Magnesium</keyword>
<keyword id="KW-0479">Metal-binding</keyword>
<keyword id="KW-0859">Xylose metabolism</keyword>
<sequence length="446" mass="48792">MSNTVFIGAKEYFPGIGKIGFEGRDSDNPLAFKVYDANKQVAGKTMAEHLRFAVAYWHSFCGNGADPFGPGTRAYPWDVGNTALARAEAKSDAAFEFFTKLGVPYYCFHDIDLAPDADDIGEYENNLKHMVGIAKQRQADTGVKLLWGTANLFSHPRYMNGASTNPDFNVVARAAVQVKAAIDATVELGGENYVFWGGREGYACLHNTQMKREQDNMARFLTLARDYGRAIGFKGNFLIEPKPMEPMKHQYDFDSATVIGFLRQHGLDQDFKLNIEANHATLSGHSFEHDLQVASDAGLLGSIDANRGNPQNGWDTDQFPTDLYDTVGAMLVVLRQGGLAPGGLNFDAKVRRESSDPQDLFLAHIGGMDAFARGLEVADALLTSSPLETWRAQRYASFDSGAGADFANGTSTLADLATYAAGKGEPTQLSGRQEAYENLINQYLTR</sequence>
<reference key="1">
    <citation type="journal article" date="2005" name="Genome Res.">
        <title>Comparative and functional genomic analyses of the pathogenicity of phytopathogen Xanthomonas campestris pv. campestris.</title>
        <authorList>
            <person name="Qian W."/>
            <person name="Jia Y."/>
            <person name="Ren S.-X."/>
            <person name="He Y.-Q."/>
            <person name="Feng J.-X."/>
            <person name="Lu L.-F."/>
            <person name="Sun Q."/>
            <person name="Ying G."/>
            <person name="Tang D.-J."/>
            <person name="Tang H."/>
            <person name="Wu W."/>
            <person name="Hao P."/>
            <person name="Wang L."/>
            <person name="Jiang B.-L."/>
            <person name="Zeng S."/>
            <person name="Gu W.-Y."/>
            <person name="Lu G."/>
            <person name="Rong L."/>
            <person name="Tian Y."/>
            <person name="Yao Z."/>
            <person name="Fu G."/>
            <person name="Chen B."/>
            <person name="Fang R."/>
            <person name="Qiang B."/>
            <person name="Chen Z."/>
            <person name="Zhao G.-P."/>
            <person name="Tang J.-L."/>
            <person name="He C."/>
        </authorList>
    </citation>
    <scope>NUCLEOTIDE SEQUENCE [LARGE SCALE GENOMIC DNA]</scope>
    <source>
        <strain>8004</strain>
    </source>
</reference>
<feature type="chain" id="PRO_0000236976" description="Xylose isomerase 2">
    <location>
        <begin position="1"/>
        <end position="446"/>
    </location>
</feature>
<feature type="active site" evidence="1">
    <location>
        <position position="109"/>
    </location>
</feature>
<feature type="active site" evidence="1">
    <location>
        <position position="112"/>
    </location>
</feature>
<feature type="binding site" evidence="1">
    <location>
        <position position="240"/>
    </location>
    <ligand>
        <name>Mg(2+)</name>
        <dbReference type="ChEBI" id="CHEBI:18420"/>
        <label>1</label>
    </ligand>
</feature>
<feature type="binding site" evidence="1">
    <location>
        <position position="276"/>
    </location>
    <ligand>
        <name>Mg(2+)</name>
        <dbReference type="ChEBI" id="CHEBI:18420"/>
        <label>1</label>
    </ligand>
</feature>
<feature type="binding site" evidence="1">
    <location>
        <position position="276"/>
    </location>
    <ligand>
        <name>Mg(2+)</name>
        <dbReference type="ChEBI" id="CHEBI:18420"/>
        <label>2</label>
    </ligand>
</feature>
<feature type="binding site" evidence="1">
    <location>
        <position position="279"/>
    </location>
    <ligand>
        <name>Mg(2+)</name>
        <dbReference type="ChEBI" id="CHEBI:18420"/>
        <label>2</label>
    </ligand>
</feature>
<feature type="binding site" evidence="1">
    <location>
        <position position="304"/>
    </location>
    <ligand>
        <name>Mg(2+)</name>
        <dbReference type="ChEBI" id="CHEBI:18420"/>
        <label>1</label>
    </ligand>
</feature>
<feature type="binding site" evidence="1">
    <location>
        <position position="315"/>
    </location>
    <ligand>
        <name>Mg(2+)</name>
        <dbReference type="ChEBI" id="CHEBI:18420"/>
        <label>2</label>
    </ligand>
</feature>
<feature type="binding site" evidence="1">
    <location>
        <position position="317"/>
    </location>
    <ligand>
        <name>Mg(2+)</name>
        <dbReference type="ChEBI" id="CHEBI:18420"/>
        <label>2</label>
    </ligand>
</feature>
<feature type="binding site" evidence="1">
    <location>
        <position position="347"/>
    </location>
    <ligand>
        <name>Mg(2+)</name>
        <dbReference type="ChEBI" id="CHEBI:18420"/>
        <label>1</label>
    </ligand>
</feature>
<protein>
    <recommendedName>
        <fullName evidence="1">Xylose isomerase 2</fullName>
        <ecNumber evidence="1">5.3.1.5</ecNumber>
    </recommendedName>
</protein>